<proteinExistence type="inferred from homology"/>
<gene>
    <name evidence="1" type="primary">atpE</name>
</gene>
<dbReference type="EMBL" id="AP004638">
    <property type="protein sequence ID" value="BAB84222.1"/>
    <property type="molecule type" value="Genomic_DNA"/>
</dbReference>
<dbReference type="RefSeq" id="NP_569635.1">
    <property type="nucleotide sequence ID" value="NC_003386.1"/>
</dbReference>
<dbReference type="SMR" id="Q8WI12"/>
<dbReference type="GeneID" id="2545106"/>
<dbReference type="GO" id="GO:0009535">
    <property type="term" value="C:chloroplast thylakoid membrane"/>
    <property type="evidence" value="ECO:0007669"/>
    <property type="project" value="UniProtKB-SubCell"/>
</dbReference>
<dbReference type="GO" id="GO:0045259">
    <property type="term" value="C:proton-transporting ATP synthase complex"/>
    <property type="evidence" value="ECO:0007669"/>
    <property type="project" value="UniProtKB-KW"/>
</dbReference>
<dbReference type="GO" id="GO:0005524">
    <property type="term" value="F:ATP binding"/>
    <property type="evidence" value="ECO:0007669"/>
    <property type="project" value="UniProtKB-UniRule"/>
</dbReference>
<dbReference type="GO" id="GO:0046933">
    <property type="term" value="F:proton-transporting ATP synthase activity, rotational mechanism"/>
    <property type="evidence" value="ECO:0007669"/>
    <property type="project" value="UniProtKB-UniRule"/>
</dbReference>
<dbReference type="CDD" id="cd12152">
    <property type="entry name" value="F1-ATPase_delta"/>
    <property type="match status" value="1"/>
</dbReference>
<dbReference type="FunFam" id="2.60.15.10:FF:000002">
    <property type="entry name" value="ATP synthase epsilon chain, chloroplastic"/>
    <property type="match status" value="1"/>
</dbReference>
<dbReference type="Gene3D" id="6.10.140.480">
    <property type="match status" value="1"/>
</dbReference>
<dbReference type="Gene3D" id="2.60.15.10">
    <property type="entry name" value="F0F1 ATP synthase delta/epsilon subunit, N-terminal"/>
    <property type="match status" value="1"/>
</dbReference>
<dbReference type="HAMAP" id="MF_00530">
    <property type="entry name" value="ATP_synth_epsil_bac"/>
    <property type="match status" value="1"/>
</dbReference>
<dbReference type="InterPro" id="IPR001469">
    <property type="entry name" value="ATP_synth_F1_dsu/esu"/>
</dbReference>
<dbReference type="InterPro" id="IPR020546">
    <property type="entry name" value="ATP_synth_F1_dsu/esu_N"/>
</dbReference>
<dbReference type="InterPro" id="IPR020547">
    <property type="entry name" value="ATP_synth_F1_esu_C"/>
</dbReference>
<dbReference type="InterPro" id="IPR036771">
    <property type="entry name" value="ATPsynth_dsu/esu_N"/>
</dbReference>
<dbReference type="NCBIfam" id="TIGR01216">
    <property type="entry name" value="ATP_synt_epsi"/>
    <property type="match status" value="1"/>
</dbReference>
<dbReference type="PANTHER" id="PTHR13822">
    <property type="entry name" value="ATP SYNTHASE DELTA/EPSILON CHAIN"/>
    <property type="match status" value="1"/>
</dbReference>
<dbReference type="PANTHER" id="PTHR13822:SF10">
    <property type="entry name" value="ATP SYNTHASE EPSILON CHAIN, CHLOROPLASTIC"/>
    <property type="match status" value="1"/>
</dbReference>
<dbReference type="Pfam" id="PF00401">
    <property type="entry name" value="ATP-synt_DE"/>
    <property type="match status" value="1"/>
</dbReference>
<dbReference type="Pfam" id="PF02823">
    <property type="entry name" value="ATP-synt_DE_N"/>
    <property type="match status" value="1"/>
</dbReference>
<dbReference type="SUPFAM" id="SSF51344">
    <property type="entry name" value="Epsilon subunit of F1F0-ATP synthase N-terminal domain"/>
    <property type="match status" value="1"/>
</dbReference>
<accession>Q8WI12</accession>
<comment type="function">
    <text evidence="1">Produces ATP from ADP in the presence of a proton gradient across the membrane.</text>
</comment>
<comment type="subunit">
    <text evidence="1">F-type ATPases have 2 components, CF(1) - the catalytic core - and CF(0) - the membrane proton channel. CF(1) has five subunits: alpha(3), beta(3), gamma(1), delta(1), epsilon(1). CF(0) has three main subunits: a, b and c.</text>
</comment>
<comment type="subcellular location">
    <subcellularLocation>
        <location evidence="1">Plastid</location>
        <location evidence="1">Chloroplast thylakoid membrane</location>
        <topology evidence="1">Peripheral membrane protein</topology>
    </subcellularLocation>
</comment>
<comment type="similarity">
    <text evidence="1">Belongs to the ATPase epsilon chain family.</text>
</comment>
<evidence type="ECO:0000255" key="1">
    <source>
        <dbReference type="HAMAP-Rule" id="MF_00530"/>
    </source>
</evidence>
<name>ATPE_PSINU</name>
<keyword id="KW-0066">ATP synthesis</keyword>
<keyword id="KW-0139">CF(1)</keyword>
<keyword id="KW-0150">Chloroplast</keyword>
<keyword id="KW-0375">Hydrogen ion transport</keyword>
<keyword id="KW-0406">Ion transport</keyword>
<keyword id="KW-0472">Membrane</keyword>
<keyword id="KW-0934">Plastid</keyword>
<keyword id="KW-0793">Thylakoid</keyword>
<keyword id="KW-0813">Transport</keyword>
<protein>
    <recommendedName>
        <fullName evidence="1">ATP synthase epsilon chain, chloroplastic</fullName>
    </recommendedName>
    <alternativeName>
        <fullName evidence="1">ATP synthase F1 sector epsilon subunit</fullName>
    </alternativeName>
    <alternativeName>
        <fullName evidence="1">F-ATPase epsilon subunit</fullName>
    </alternativeName>
</protein>
<geneLocation type="chloroplast"/>
<feature type="chain" id="PRO_0000188290" description="ATP synthase epsilon chain, chloroplastic">
    <location>
        <begin position="1"/>
        <end position="133"/>
    </location>
</feature>
<sequence length="133" mass="14920">MLNLRVIAPNRIVWNSEVREIILSTNNGQMGILPNHAPLLTALDIGVMKIRIDERWSNMALMGGFATIDNNQITILVNEAEKSSEIDPEEAQETFQKAQANLTRAEGKRKTIEAHLAFKRAKARLEAINVTQE</sequence>
<reference key="1">
    <citation type="journal article" date="2004" name="Mol. Biol. Evol.">
        <title>Chloroplast phylogeny indicates that bryophytes are monophyletic.</title>
        <authorList>
            <person name="Nishiyama T."/>
            <person name="Wolf P.G."/>
            <person name="Kugita M."/>
            <person name="Sinclair R.B."/>
            <person name="Sugita M."/>
            <person name="Sugiura C."/>
            <person name="Wakasugi T."/>
            <person name="Yamada K."/>
            <person name="Yoshinaga K."/>
            <person name="Yamaguchi K."/>
            <person name="Ueda K."/>
            <person name="Hasebe M."/>
        </authorList>
    </citation>
    <scope>NUCLEOTIDE SEQUENCE [LARGE SCALE GENOMIC DNA]</scope>
    <source>
        <strain>Kingyoku</strain>
    </source>
</reference>
<organism>
    <name type="scientific">Psilotum nudum</name>
    <name type="common">Whisk fern</name>
    <name type="synonym">Lycopodium nudum</name>
    <dbReference type="NCBI Taxonomy" id="3240"/>
    <lineage>
        <taxon>Eukaryota</taxon>
        <taxon>Viridiplantae</taxon>
        <taxon>Streptophyta</taxon>
        <taxon>Embryophyta</taxon>
        <taxon>Tracheophyta</taxon>
        <taxon>Polypodiopsida</taxon>
        <taxon>Ophioglossidae</taxon>
        <taxon>Psilotales</taxon>
        <taxon>Psilotaceae</taxon>
        <taxon>Psilotum</taxon>
    </lineage>
</organism>